<keyword id="KW-0963">Cytoplasm</keyword>
<keyword id="KW-1185">Reference proteome</keyword>
<keyword id="KW-0694">RNA-binding</keyword>
<keyword id="KW-0808">Transferase</keyword>
<keyword id="KW-0819">tRNA processing</keyword>
<keyword id="KW-0820">tRNA-binding</keyword>
<feature type="chain" id="PRO_0000368251" description="Cytoplasmic tRNA 2-thiolation protein 1">
    <location>
        <begin position="1"/>
        <end position="343"/>
    </location>
</feature>
<protein>
    <recommendedName>
        <fullName evidence="1">Cytoplasmic tRNA 2-thiolation protein 1</fullName>
        <ecNumber evidence="1">2.7.7.-</ecNumber>
    </recommendedName>
    <alternativeName>
        <fullName evidence="1">Cytoplasmic tRNA adenylyltransferase 1</fullName>
    </alternativeName>
</protein>
<reference key="1">
    <citation type="journal article" date="2007" name="Nature">
        <title>Evolution of genes and genomes on the Drosophila phylogeny.</title>
        <authorList>
            <consortium name="Drosophila 12 genomes consortium"/>
        </authorList>
    </citation>
    <scope>NUCLEOTIDE SEQUENCE [LARGE SCALE GENOMIC DNA]</scope>
    <source>
        <strain>Tucson 14030-0811.24</strain>
    </source>
</reference>
<gene>
    <name type="ORF">GK22963</name>
</gene>
<organism>
    <name type="scientific">Drosophila willistoni</name>
    <name type="common">Fruit fly</name>
    <dbReference type="NCBI Taxonomy" id="7260"/>
    <lineage>
        <taxon>Eukaryota</taxon>
        <taxon>Metazoa</taxon>
        <taxon>Ecdysozoa</taxon>
        <taxon>Arthropoda</taxon>
        <taxon>Hexapoda</taxon>
        <taxon>Insecta</taxon>
        <taxon>Pterygota</taxon>
        <taxon>Neoptera</taxon>
        <taxon>Endopterygota</taxon>
        <taxon>Diptera</taxon>
        <taxon>Brachycera</taxon>
        <taxon>Muscomorpha</taxon>
        <taxon>Ephydroidea</taxon>
        <taxon>Drosophilidae</taxon>
        <taxon>Drosophila</taxon>
        <taxon>Sophophora</taxon>
    </lineage>
</organism>
<comment type="function">
    <text evidence="1">Plays a central role in 2-thiolation of mcm(5)S(2)U at tRNA wobble positions of tRNA(Lys), tRNA(Glu) and tRNA(Gln). Directly binds tRNAs and probably acts by catalyzing adenylation of tRNAs, an intermediate required for 2-thiolation. It is unclear whether it acts as a sulfurtransferase that transfers sulfur from thiocarboxylated URM1 onto the uridine of tRNAs at wobble position.</text>
</comment>
<comment type="pathway">
    <text evidence="1">tRNA modification; 5-methoxycarbonylmethyl-2-thiouridine-tRNA biosynthesis.</text>
</comment>
<comment type="subcellular location">
    <subcellularLocation>
        <location evidence="1">Cytoplasm</location>
    </subcellularLocation>
</comment>
<comment type="similarity">
    <text evidence="1">Belongs to the TtcA family. CTU1/NCS6/ATPBD3 subfamily.</text>
</comment>
<accession>B4NN33</accession>
<evidence type="ECO:0000255" key="1">
    <source>
        <dbReference type="HAMAP-Rule" id="MF_03053"/>
    </source>
</evidence>
<proteinExistence type="inferred from homology"/>
<name>CTU1_DROWI</name>
<sequence>MPVYCKSQCGNRAVLRRPKTGDALCKECFFAAFEAEIHHTISSNQLFQPGQKIAVAASGGKDSTVLAHVLKLLNEKHNYGLDLVLLSIDEGISGYRDDSLETVKQNRDDYQMSLKILSYEELYGWTMDRIVAQIGRSNNCTFCGVFRRQALDRGAKLLQVDSIATGHNADDIAETVLMNILRGDTARLRRCTDIRTGGGEDSIPRVKPLKYSYEKDIVMYAHYKKLVYFSTECVFAPNAYRGHARAFLKDLEKVRPSVIMDIIYSGEQLRFKDTVKKPVRGTCSRCGFVSSQQPCKACVLLEGLNRGLPKLGIGKKSKGDRMIAEQNRELDLRERANLVKNDF</sequence>
<dbReference type="EC" id="2.7.7.-" evidence="1"/>
<dbReference type="EMBL" id="CH964282">
    <property type="protein sequence ID" value="EDW85772.1"/>
    <property type="molecule type" value="Genomic_DNA"/>
</dbReference>
<dbReference type="SMR" id="B4NN33"/>
<dbReference type="STRING" id="7260.B4NN33"/>
<dbReference type="EnsemblMetazoa" id="FBtr0253614">
    <property type="protein sequence ID" value="FBpp0252106"/>
    <property type="gene ID" value="FBgn0224925"/>
</dbReference>
<dbReference type="EnsemblMetazoa" id="XM_002074750.4">
    <property type="protein sequence ID" value="XP_002074786.1"/>
    <property type="gene ID" value="LOC6652355"/>
</dbReference>
<dbReference type="GeneID" id="6652355"/>
<dbReference type="KEGG" id="dwi:6652355"/>
<dbReference type="CTD" id="90353"/>
<dbReference type="eggNOG" id="KOG2840">
    <property type="taxonomic scope" value="Eukaryota"/>
</dbReference>
<dbReference type="HOGENOM" id="CLU_026481_1_2_1"/>
<dbReference type="OMA" id="KPVRGIC"/>
<dbReference type="OrthoDB" id="198857at2759"/>
<dbReference type="PhylomeDB" id="B4NN33"/>
<dbReference type="UniPathway" id="UPA00988"/>
<dbReference type="Proteomes" id="UP000007798">
    <property type="component" value="Unassembled WGS sequence"/>
</dbReference>
<dbReference type="GO" id="GO:0005829">
    <property type="term" value="C:cytosol"/>
    <property type="evidence" value="ECO:0000250"/>
    <property type="project" value="UniProtKB"/>
</dbReference>
<dbReference type="GO" id="GO:0002144">
    <property type="term" value="C:cytosolic tRNA wobble base thiouridylase complex"/>
    <property type="evidence" value="ECO:0007669"/>
    <property type="project" value="TreeGrafter"/>
</dbReference>
<dbReference type="GO" id="GO:0005739">
    <property type="term" value="C:mitochondrion"/>
    <property type="evidence" value="ECO:0007669"/>
    <property type="project" value="TreeGrafter"/>
</dbReference>
<dbReference type="GO" id="GO:0016779">
    <property type="term" value="F:nucleotidyltransferase activity"/>
    <property type="evidence" value="ECO:0007669"/>
    <property type="project" value="UniProtKB-UniRule"/>
</dbReference>
<dbReference type="GO" id="GO:0000049">
    <property type="term" value="F:tRNA binding"/>
    <property type="evidence" value="ECO:0000250"/>
    <property type="project" value="UniProtKB"/>
</dbReference>
<dbReference type="GO" id="GO:0032447">
    <property type="term" value="P:protein urmylation"/>
    <property type="evidence" value="ECO:0007669"/>
    <property type="project" value="UniProtKB-UniRule"/>
</dbReference>
<dbReference type="GO" id="GO:0034227">
    <property type="term" value="P:tRNA thio-modification"/>
    <property type="evidence" value="ECO:0000250"/>
    <property type="project" value="UniProtKB"/>
</dbReference>
<dbReference type="GO" id="GO:0002143">
    <property type="term" value="P:tRNA wobble position uridine thiolation"/>
    <property type="evidence" value="ECO:0007669"/>
    <property type="project" value="TreeGrafter"/>
</dbReference>
<dbReference type="GO" id="GO:0002098">
    <property type="term" value="P:tRNA wobble uridine modification"/>
    <property type="evidence" value="ECO:0000250"/>
    <property type="project" value="UniProtKB"/>
</dbReference>
<dbReference type="CDD" id="cd01713">
    <property type="entry name" value="CTU1-like"/>
    <property type="match status" value="1"/>
</dbReference>
<dbReference type="FunFam" id="3.40.50.620:FF:000054">
    <property type="entry name" value="Cytoplasmic tRNA 2-thiolation protein 1"/>
    <property type="match status" value="1"/>
</dbReference>
<dbReference type="Gene3D" id="3.40.50.620">
    <property type="entry name" value="HUPs"/>
    <property type="match status" value="1"/>
</dbReference>
<dbReference type="HAMAP" id="MF_03053">
    <property type="entry name" value="CTU1"/>
    <property type="match status" value="1"/>
</dbReference>
<dbReference type="InterPro" id="IPR056369">
    <property type="entry name" value="CTU1-like_ATP-bd"/>
</dbReference>
<dbReference type="InterPro" id="IPR032442">
    <property type="entry name" value="CTU1_C"/>
</dbReference>
<dbReference type="InterPro" id="IPR000541">
    <property type="entry name" value="Ncs6/Tuc1/Ctu1"/>
</dbReference>
<dbReference type="InterPro" id="IPR014729">
    <property type="entry name" value="Rossmann-like_a/b/a_fold"/>
</dbReference>
<dbReference type="InterPro" id="IPR011063">
    <property type="entry name" value="TilS/TtcA_N"/>
</dbReference>
<dbReference type="InterPro" id="IPR035107">
    <property type="entry name" value="tRNA_thiolation_TtcA_Ctu1"/>
</dbReference>
<dbReference type="InterPro" id="IPR054306">
    <property type="entry name" value="TtuA-like_LIM_N"/>
</dbReference>
<dbReference type="InterPro" id="IPR020554">
    <property type="entry name" value="UPF0021_CS"/>
</dbReference>
<dbReference type="NCBIfam" id="TIGR00269">
    <property type="entry name" value="TIGR00269 family protein"/>
    <property type="match status" value="1"/>
</dbReference>
<dbReference type="PANTHER" id="PTHR11807">
    <property type="entry name" value="ATPASES OF THE PP SUPERFAMILY-RELATED"/>
    <property type="match status" value="1"/>
</dbReference>
<dbReference type="PANTHER" id="PTHR11807:SF12">
    <property type="entry name" value="CYTOPLASMIC TRNA 2-THIOLATION PROTEIN 1"/>
    <property type="match status" value="1"/>
</dbReference>
<dbReference type="Pfam" id="PF01171">
    <property type="entry name" value="ATP_bind_3"/>
    <property type="match status" value="1"/>
</dbReference>
<dbReference type="Pfam" id="PF22082">
    <property type="entry name" value="TtuA_LIM_N"/>
    <property type="match status" value="1"/>
</dbReference>
<dbReference type="Pfam" id="PF16503">
    <property type="entry name" value="zn-ribbon_14"/>
    <property type="match status" value="1"/>
</dbReference>
<dbReference type="PIRSF" id="PIRSF004976">
    <property type="entry name" value="ATPase_YdaO"/>
    <property type="match status" value="1"/>
</dbReference>
<dbReference type="SUPFAM" id="SSF52402">
    <property type="entry name" value="Adenine nucleotide alpha hydrolases-like"/>
    <property type="match status" value="1"/>
</dbReference>
<dbReference type="PROSITE" id="PS01263">
    <property type="entry name" value="UPF0021"/>
    <property type="match status" value="1"/>
</dbReference>